<feature type="chain" id="PRO_1000051597" description="Selenide, water dikinase">
    <location>
        <begin position="1"/>
        <end position="351"/>
    </location>
</feature>
<feature type="active site" evidence="2">
    <location>
        <position position="15"/>
    </location>
</feature>
<feature type="binding site" description="in other chain" evidence="2">
    <location>
        <position position="18"/>
    </location>
    <ligand>
        <name>ATP</name>
        <dbReference type="ChEBI" id="CHEBI:30616"/>
        <note>ligand shared between dimeric partners</note>
    </ligand>
</feature>
<feature type="binding site" description="in other chain" evidence="2">
    <location>
        <begin position="47"/>
        <end position="49"/>
    </location>
    <ligand>
        <name>ATP</name>
        <dbReference type="ChEBI" id="CHEBI:30616"/>
        <note>ligand shared between dimeric partners</note>
    </ligand>
</feature>
<feature type="binding site" evidence="2">
    <location>
        <position position="50"/>
    </location>
    <ligand>
        <name>Mg(2+)</name>
        <dbReference type="ChEBI" id="CHEBI:18420"/>
    </ligand>
</feature>
<feature type="binding site" description="in other chain" evidence="2">
    <location>
        <position position="67"/>
    </location>
    <ligand>
        <name>ATP</name>
        <dbReference type="ChEBI" id="CHEBI:30616"/>
        <note>ligand shared between dimeric partners</note>
    </ligand>
</feature>
<feature type="binding site" description="in other chain" evidence="2">
    <location>
        <position position="90"/>
    </location>
    <ligand>
        <name>ATP</name>
        <dbReference type="ChEBI" id="CHEBI:30616"/>
        <note>ligand shared between dimeric partners</note>
    </ligand>
</feature>
<feature type="binding site" evidence="2">
    <location>
        <position position="90"/>
    </location>
    <ligand>
        <name>Mg(2+)</name>
        <dbReference type="ChEBI" id="CHEBI:18420"/>
    </ligand>
</feature>
<feature type="binding site" evidence="2">
    <location>
        <begin position="138"/>
        <end position="140"/>
    </location>
    <ligand>
        <name>ATP</name>
        <dbReference type="ChEBI" id="CHEBI:30616"/>
        <note>ligand shared between dimeric partners</note>
    </ligand>
</feature>
<feature type="binding site" evidence="2">
    <location>
        <position position="227"/>
    </location>
    <ligand>
        <name>Mg(2+)</name>
        <dbReference type="ChEBI" id="CHEBI:18420"/>
    </ligand>
</feature>
<feature type="site" description="Important for catalytic activity" evidence="2">
    <location>
        <position position="18"/>
    </location>
</feature>
<feature type="non-standard amino acid" description="Selenocysteine" evidence="1">
    <location>
        <position position="15"/>
    </location>
</feature>
<protein>
    <recommendedName>
        <fullName evidence="2">Selenide, water dikinase</fullName>
        <ecNumber evidence="2">2.7.9.3</ecNumber>
    </recommendedName>
    <alternativeName>
        <fullName evidence="2">Selenium donor protein</fullName>
    </alternativeName>
    <alternativeName>
        <fullName evidence="2">Selenophosphate synthase</fullName>
    </alternativeName>
</protein>
<comment type="function">
    <text evidence="2">Synthesizes selenophosphate from selenide and ATP.</text>
</comment>
<comment type="catalytic activity">
    <reaction evidence="2">
        <text>hydrogenselenide + ATP + H2O = selenophosphate + AMP + phosphate + 2 H(+)</text>
        <dbReference type="Rhea" id="RHEA:18737"/>
        <dbReference type="ChEBI" id="CHEBI:15377"/>
        <dbReference type="ChEBI" id="CHEBI:15378"/>
        <dbReference type="ChEBI" id="CHEBI:16144"/>
        <dbReference type="ChEBI" id="CHEBI:29317"/>
        <dbReference type="ChEBI" id="CHEBI:30616"/>
        <dbReference type="ChEBI" id="CHEBI:43474"/>
        <dbReference type="ChEBI" id="CHEBI:456215"/>
        <dbReference type="EC" id="2.7.9.3"/>
    </reaction>
</comment>
<comment type="cofactor">
    <cofactor evidence="2">
        <name>Mg(2+)</name>
        <dbReference type="ChEBI" id="CHEBI:18420"/>
    </cofactor>
    <text evidence="2">Binds 1 Mg(2+) ion per monomer.</text>
</comment>
<comment type="subunit">
    <text evidence="2">Homodimer.</text>
</comment>
<comment type="similarity">
    <text evidence="2">Belongs to the selenophosphate synthase 1 family. Class I subfamily.</text>
</comment>
<sequence length="351" mass="36977">MTVDRLTSRSRAAGUAAKIAPGDLERILATLPRDPREGERVVVGTRDNEDAAIVRVPGGKAIVQTLDFFTPIVDDPYLFGQIAAANALSDVYAMGGEPWCALNIVCFPVKELPEEILADILRGGADKVREAGAVLVGGHSIEDESIKYGLSVTGIIDPDCYATNTGLRPGDVLLLTKPLGSGVLATAVKAGWDGFEAHEQELGRWGAMLNRAGGRVIRELGLAAATDVTGFGLGGHLLEMANASNMSVHVDVSTLPLMPAVLDLVATGLLPAGSHANRHFCSGNVSVHPEVDSLLVDIVFDAQTSGGLILAVPPHLVDDACSILRAEDAPFWRIGHVEEMGEGVSRLVLQP</sequence>
<proteinExistence type="inferred from homology"/>
<reference key="1">
    <citation type="journal article" date="2009" name="Environ. Microbiol.">
        <title>Contribution of mobile genetic elements to Desulfovibrio vulgaris genome plasticity.</title>
        <authorList>
            <person name="Walker C.B."/>
            <person name="Stolyar S."/>
            <person name="Chivian D."/>
            <person name="Pinel N."/>
            <person name="Gabster J.A."/>
            <person name="Dehal P.S."/>
            <person name="He Z."/>
            <person name="Yang Z.K."/>
            <person name="Yen H.C."/>
            <person name="Zhou J."/>
            <person name="Wall J.D."/>
            <person name="Hazen T.C."/>
            <person name="Arkin A.P."/>
            <person name="Stahl D.A."/>
        </authorList>
    </citation>
    <scope>NUCLEOTIDE SEQUENCE [LARGE SCALE GENOMIC DNA]</scope>
    <source>
        <strain>DP4</strain>
    </source>
</reference>
<organism>
    <name type="scientific">Nitratidesulfovibrio vulgaris (strain DP4)</name>
    <name type="common">Desulfovibrio vulgaris</name>
    <dbReference type="NCBI Taxonomy" id="391774"/>
    <lineage>
        <taxon>Bacteria</taxon>
        <taxon>Pseudomonadati</taxon>
        <taxon>Thermodesulfobacteriota</taxon>
        <taxon>Desulfovibrionia</taxon>
        <taxon>Desulfovibrionales</taxon>
        <taxon>Desulfovibrionaceae</taxon>
        <taxon>Nitratidesulfovibrio</taxon>
    </lineage>
</organism>
<evidence type="ECO:0000255" key="1"/>
<evidence type="ECO:0000255" key="2">
    <source>
        <dbReference type="HAMAP-Rule" id="MF_00625"/>
    </source>
</evidence>
<keyword id="KW-0067">ATP-binding</keyword>
<keyword id="KW-0418">Kinase</keyword>
<keyword id="KW-0460">Magnesium</keyword>
<keyword id="KW-0479">Metal-binding</keyword>
<keyword id="KW-0547">Nucleotide-binding</keyword>
<keyword id="KW-0711">Selenium</keyword>
<keyword id="KW-0712">Selenocysteine</keyword>
<keyword id="KW-0808">Transferase</keyword>
<dbReference type="EC" id="2.7.9.3" evidence="2"/>
<dbReference type="EMBL" id="CP000527">
    <property type="protein sequence ID" value="ABM28753.1"/>
    <property type="molecule type" value="Genomic_DNA"/>
</dbReference>
<dbReference type="RefSeq" id="WP_011792452.1">
    <property type="nucleotide sequence ID" value="NC_008751.1"/>
</dbReference>
<dbReference type="KEGG" id="dvl:Dvul_1736"/>
<dbReference type="HOGENOM" id="CLU_032859_0_1_7"/>
<dbReference type="Proteomes" id="UP000009173">
    <property type="component" value="Chromosome"/>
</dbReference>
<dbReference type="GO" id="GO:0005737">
    <property type="term" value="C:cytoplasm"/>
    <property type="evidence" value="ECO:0007669"/>
    <property type="project" value="TreeGrafter"/>
</dbReference>
<dbReference type="GO" id="GO:0005524">
    <property type="term" value="F:ATP binding"/>
    <property type="evidence" value="ECO:0007669"/>
    <property type="project" value="UniProtKB-UniRule"/>
</dbReference>
<dbReference type="GO" id="GO:0000287">
    <property type="term" value="F:magnesium ion binding"/>
    <property type="evidence" value="ECO:0007669"/>
    <property type="project" value="UniProtKB-UniRule"/>
</dbReference>
<dbReference type="GO" id="GO:0004756">
    <property type="term" value="F:selenide, water dikinase activity"/>
    <property type="evidence" value="ECO:0007669"/>
    <property type="project" value="UniProtKB-UniRule"/>
</dbReference>
<dbReference type="GO" id="GO:0016260">
    <property type="term" value="P:selenocysteine biosynthetic process"/>
    <property type="evidence" value="ECO:0007669"/>
    <property type="project" value="InterPro"/>
</dbReference>
<dbReference type="CDD" id="cd02195">
    <property type="entry name" value="SelD"/>
    <property type="match status" value="1"/>
</dbReference>
<dbReference type="FunFam" id="3.30.1330.10:FF:000003">
    <property type="entry name" value="Selenide, water dikinase"/>
    <property type="match status" value="1"/>
</dbReference>
<dbReference type="Gene3D" id="3.90.650.10">
    <property type="entry name" value="PurM-like C-terminal domain"/>
    <property type="match status" value="1"/>
</dbReference>
<dbReference type="Gene3D" id="3.30.1330.10">
    <property type="entry name" value="PurM-like, N-terminal domain"/>
    <property type="match status" value="1"/>
</dbReference>
<dbReference type="HAMAP" id="MF_00625">
    <property type="entry name" value="SelD"/>
    <property type="match status" value="1"/>
</dbReference>
<dbReference type="InterPro" id="IPR010918">
    <property type="entry name" value="PurM-like_C_dom"/>
</dbReference>
<dbReference type="InterPro" id="IPR036676">
    <property type="entry name" value="PurM-like_C_sf"/>
</dbReference>
<dbReference type="InterPro" id="IPR016188">
    <property type="entry name" value="PurM-like_N"/>
</dbReference>
<dbReference type="InterPro" id="IPR036921">
    <property type="entry name" value="PurM-like_N_sf"/>
</dbReference>
<dbReference type="InterPro" id="IPR023061">
    <property type="entry name" value="SelD_I"/>
</dbReference>
<dbReference type="InterPro" id="IPR004536">
    <property type="entry name" value="SPS/SelD"/>
</dbReference>
<dbReference type="NCBIfam" id="NF002098">
    <property type="entry name" value="PRK00943.1"/>
    <property type="match status" value="1"/>
</dbReference>
<dbReference type="NCBIfam" id="TIGR00476">
    <property type="entry name" value="selD"/>
    <property type="match status" value="1"/>
</dbReference>
<dbReference type="PANTHER" id="PTHR10256:SF0">
    <property type="entry name" value="INACTIVE SELENIDE, WATER DIKINASE-LIKE PROTEIN-RELATED"/>
    <property type="match status" value="1"/>
</dbReference>
<dbReference type="PANTHER" id="PTHR10256">
    <property type="entry name" value="SELENIDE, WATER DIKINASE"/>
    <property type="match status" value="1"/>
</dbReference>
<dbReference type="Pfam" id="PF00586">
    <property type="entry name" value="AIRS"/>
    <property type="match status" value="1"/>
</dbReference>
<dbReference type="Pfam" id="PF02769">
    <property type="entry name" value="AIRS_C"/>
    <property type="match status" value="1"/>
</dbReference>
<dbReference type="PIRSF" id="PIRSF036407">
    <property type="entry name" value="Selenphspht_syn"/>
    <property type="match status" value="1"/>
</dbReference>
<dbReference type="SUPFAM" id="SSF56042">
    <property type="entry name" value="PurM C-terminal domain-like"/>
    <property type="match status" value="1"/>
</dbReference>
<dbReference type="SUPFAM" id="SSF55326">
    <property type="entry name" value="PurM N-terminal domain-like"/>
    <property type="match status" value="1"/>
</dbReference>
<accession>A1VE87</accession>
<name>SELD_NITV4</name>
<gene>
    <name evidence="2" type="primary">selD</name>
    <name type="ordered locus">Dvul_1736</name>
</gene>